<name>TDCC_SHISS</name>
<comment type="function">
    <text evidence="1">Involved in the import of threonine and serine into the cell, with the concomitant import of a proton (symport system).</text>
</comment>
<comment type="catalytic activity">
    <reaction evidence="1">
        <text>L-threonine(in) + H(+)(in) = L-threonine(out) + H(+)(out)</text>
        <dbReference type="Rhea" id="RHEA:28883"/>
        <dbReference type="ChEBI" id="CHEBI:15378"/>
        <dbReference type="ChEBI" id="CHEBI:57926"/>
    </reaction>
    <physiologicalReaction direction="right-to-left" evidence="1">
        <dbReference type="Rhea" id="RHEA:28885"/>
    </physiologicalReaction>
</comment>
<comment type="catalytic activity">
    <reaction evidence="1">
        <text>L-serine(in) + H(+)(in) = L-serine(out) + H(+)(out)</text>
        <dbReference type="Rhea" id="RHEA:28887"/>
        <dbReference type="ChEBI" id="CHEBI:15378"/>
        <dbReference type="ChEBI" id="CHEBI:33384"/>
    </reaction>
    <physiologicalReaction direction="right-to-left" evidence="1">
        <dbReference type="Rhea" id="RHEA:28889"/>
    </physiologicalReaction>
</comment>
<comment type="subcellular location">
    <subcellularLocation>
        <location evidence="1">Cell inner membrane</location>
        <topology evidence="1">Multi-pass membrane protein</topology>
    </subcellularLocation>
</comment>
<comment type="similarity">
    <text evidence="1">Belongs to the amino acid/polyamine transporter 2 family. SdaC/TdcC subfamily.</text>
</comment>
<protein>
    <recommendedName>
        <fullName evidence="1">Threonine/serine transporter TdcC</fullName>
    </recommendedName>
    <alternativeName>
        <fullName evidence="1">H(+)/threonine-serine symporter</fullName>
    </alternativeName>
</protein>
<dbReference type="EMBL" id="CP000038">
    <property type="protein sequence ID" value="AAZ89849.1"/>
    <property type="molecule type" value="Genomic_DNA"/>
</dbReference>
<dbReference type="RefSeq" id="WP_000107723.1">
    <property type="nucleotide sequence ID" value="NC_007384.1"/>
</dbReference>
<dbReference type="SMR" id="Q3YXB3"/>
<dbReference type="GeneID" id="93778869"/>
<dbReference type="KEGG" id="ssn:SSON_3273"/>
<dbReference type="HOGENOM" id="CLU_052043_1_1_6"/>
<dbReference type="Proteomes" id="UP000002529">
    <property type="component" value="Chromosome"/>
</dbReference>
<dbReference type="GO" id="GO:0005886">
    <property type="term" value="C:plasma membrane"/>
    <property type="evidence" value="ECO:0007669"/>
    <property type="project" value="UniProtKB-SubCell"/>
</dbReference>
<dbReference type="GO" id="GO:0015194">
    <property type="term" value="F:L-serine transmembrane transporter activity"/>
    <property type="evidence" value="ECO:0007669"/>
    <property type="project" value="InterPro"/>
</dbReference>
<dbReference type="GO" id="GO:0015293">
    <property type="term" value="F:symporter activity"/>
    <property type="evidence" value="ECO:0007669"/>
    <property type="project" value="UniProtKB-UniRule"/>
</dbReference>
<dbReference type="GO" id="GO:0015565">
    <property type="term" value="F:threonine efflux transmembrane transporter activity"/>
    <property type="evidence" value="ECO:0007669"/>
    <property type="project" value="InterPro"/>
</dbReference>
<dbReference type="HAMAP" id="MF_01583">
    <property type="entry name" value="Thr_Ser_transp_TdcC"/>
    <property type="match status" value="1"/>
</dbReference>
<dbReference type="InterPro" id="IPR018227">
    <property type="entry name" value="Amino_acid_transport_2"/>
</dbReference>
<dbReference type="InterPro" id="IPR004694">
    <property type="entry name" value="Hydroxy_aa_transpt"/>
</dbReference>
<dbReference type="InterPro" id="IPR023726">
    <property type="entry name" value="Thr/Ser_transpt_TdcC"/>
</dbReference>
<dbReference type="NCBIfam" id="NF010152">
    <property type="entry name" value="PRK13629.1"/>
    <property type="match status" value="1"/>
</dbReference>
<dbReference type="NCBIfam" id="TIGR00814">
    <property type="entry name" value="stp"/>
    <property type="match status" value="1"/>
</dbReference>
<dbReference type="PANTHER" id="PTHR35334">
    <property type="entry name" value="SERINE TRANSPORTER"/>
    <property type="match status" value="1"/>
</dbReference>
<dbReference type="PANTHER" id="PTHR35334:SF1">
    <property type="entry name" value="THREONINE_SERINE TRANSPORTER TDCC"/>
    <property type="match status" value="1"/>
</dbReference>
<dbReference type="Pfam" id="PF03222">
    <property type="entry name" value="Trp_Tyr_perm"/>
    <property type="match status" value="1"/>
</dbReference>
<evidence type="ECO:0000255" key="1">
    <source>
        <dbReference type="HAMAP-Rule" id="MF_01583"/>
    </source>
</evidence>
<proteinExistence type="inferred from homology"/>
<keyword id="KW-0029">Amino-acid transport</keyword>
<keyword id="KW-0997">Cell inner membrane</keyword>
<keyword id="KW-1003">Cell membrane</keyword>
<keyword id="KW-0472">Membrane</keyword>
<keyword id="KW-1185">Reference proteome</keyword>
<keyword id="KW-0769">Symport</keyword>
<keyword id="KW-0812">Transmembrane</keyword>
<keyword id="KW-1133">Transmembrane helix</keyword>
<keyword id="KW-0813">Transport</keyword>
<gene>
    <name evidence="1" type="primary">tdcC</name>
    <name type="ordered locus">SSON_3273</name>
</gene>
<reference key="1">
    <citation type="journal article" date="2005" name="Nucleic Acids Res.">
        <title>Genome dynamics and diversity of Shigella species, the etiologic agents of bacillary dysentery.</title>
        <authorList>
            <person name="Yang F."/>
            <person name="Yang J."/>
            <person name="Zhang X."/>
            <person name="Chen L."/>
            <person name="Jiang Y."/>
            <person name="Yan Y."/>
            <person name="Tang X."/>
            <person name="Wang J."/>
            <person name="Xiong Z."/>
            <person name="Dong J."/>
            <person name="Xue Y."/>
            <person name="Zhu Y."/>
            <person name="Xu X."/>
            <person name="Sun L."/>
            <person name="Chen S."/>
            <person name="Nie H."/>
            <person name="Peng J."/>
            <person name="Xu J."/>
            <person name="Wang Y."/>
            <person name="Yuan Z."/>
            <person name="Wen Y."/>
            <person name="Yao Z."/>
            <person name="Shen Y."/>
            <person name="Qiang B."/>
            <person name="Hou Y."/>
            <person name="Yu J."/>
            <person name="Jin Q."/>
        </authorList>
    </citation>
    <scope>NUCLEOTIDE SEQUENCE [LARGE SCALE GENOMIC DNA]</scope>
    <source>
        <strain>Ss046</strain>
    </source>
</reference>
<sequence>MSTSDSIVSSQTKQSSWRKSDTTWTLGLFGTAIGAGVLFFPIRAGFGGLIPILLMLVLAYPIAFYCHRALARLCLSGSNPSGNITETVEEHFGKTGGVVITFLYFFAICPLLWIYGVTITNTFMTFWENQLGFAPLNRGFVALFLLLLMAFVIWFGKDLMVKVMSYLVWPFIASLVLISLSLIPYWNSAVIDQVDLGSLSLTGHDGILITVWLGISIMVFSFNFSPIVSSFVVSKREEYEKDFGRDFTERKCSQIISRASMLMVAVVMFFAFSCLFTLSPANMAEAKAQNIPVLSYLANHFASMTGTKTTFAITLEYAASIIALVAIFKSFFGHYLGTLEGLNGLVLKFGYKGDKTKVSLGKLNTISMIFIMGSTWVVAYANPNILDLIEAMGAPIIASLLCLLPMYAIRKAPSLAKYRGRLDNVFVTVIGLLTILNIVYKLF</sequence>
<feature type="chain" id="PRO_0000309175" description="Threonine/serine transporter TdcC">
    <location>
        <begin position="1"/>
        <end position="443"/>
    </location>
</feature>
<feature type="transmembrane region" description="Helical" evidence="1">
    <location>
        <begin position="22"/>
        <end position="42"/>
    </location>
</feature>
<feature type="transmembrane region" description="Helical" evidence="1">
    <location>
        <begin position="44"/>
        <end position="64"/>
    </location>
</feature>
<feature type="transmembrane region" description="Helical" evidence="1">
    <location>
        <begin position="97"/>
        <end position="117"/>
    </location>
</feature>
<feature type="transmembrane region" description="Helical" evidence="1">
    <location>
        <begin position="140"/>
        <end position="160"/>
    </location>
</feature>
<feature type="transmembrane region" description="Helical" evidence="1">
    <location>
        <begin position="163"/>
        <end position="183"/>
    </location>
</feature>
<feature type="transmembrane region" description="Helical" evidence="1">
    <location>
        <begin position="207"/>
        <end position="227"/>
    </location>
</feature>
<feature type="transmembrane region" description="Helical" evidence="1">
    <location>
        <begin position="261"/>
        <end position="281"/>
    </location>
</feature>
<feature type="transmembrane region" description="Helical" evidence="1">
    <location>
        <begin position="311"/>
        <end position="331"/>
    </location>
</feature>
<feature type="transmembrane region" description="Helical" evidence="1">
    <location>
        <begin position="366"/>
        <end position="386"/>
    </location>
</feature>
<feature type="transmembrane region" description="Helical" evidence="1">
    <location>
        <begin position="389"/>
        <end position="409"/>
    </location>
</feature>
<feature type="transmembrane region" description="Helical" evidence="1">
    <location>
        <begin position="423"/>
        <end position="443"/>
    </location>
</feature>
<organism>
    <name type="scientific">Shigella sonnei (strain Ss046)</name>
    <dbReference type="NCBI Taxonomy" id="300269"/>
    <lineage>
        <taxon>Bacteria</taxon>
        <taxon>Pseudomonadati</taxon>
        <taxon>Pseudomonadota</taxon>
        <taxon>Gammaproteobacteria</taxon>
        <taxon>Enterobacterales</taxon>
        <taxon>Enterobacteriaceae</taxon>
        <taxon>Shigella</taxon>
    </lineage>
</organism>
<accession>Q3YXB3</accession>